<sequence length="338" mass="38246">MVLGVVGISYREAALKEREAAINILKDFEANTLFSQRFFGGEGSFVLLLTCHRAEIYYFSKSNHNVQSELLSRISALGARPYCYQGLACFTHLFTVTSGMDSLISGETEIQGQVKRAYIKAKTDRELPFALHFLFQKALKEGKDFRSQVSLSHPVVTIESVVEQTLDLHGKSTKDKLLFIGYSDINRKVANGLSAKGYRNLIFCSRKNISIPYATVARSQLSFREPYDVIFFGSSESAKDFPGLSLENLASISNRVIFDFNVPRTFTLMERPKDIVCLDMDFISEQVQKKLQISKQCTNKEKPFLALAARKQWEVYEKKCSHISSSQLQTSRPKLLIL</sequence>
<proteinExistence type="inferred from homology"/>
<keyword id="KW-0521">NADP</keyword>
<keyword id="KW-0560">Oxidoreductase</keyword>
<keyword id="KW-0627">Porphyrin biosynthesis</keyword>
<name>HEM1_CHLCV</name>
<evidence type="ECO:0000255" key="1">
    <source>
        <dbReference type="HAMAP-Rule" id="MF_00087"/>
    </source>
</evidence>
<reference key="1">
    <citation type="journal article" date="2003" name="Nucleic Acids Res.">
        <title>Genome sequence of Chlamydophila caviae (Chlamydia psittaci GPIC): examining the role of niche-specific genes in the evolution of the Chlamydiaceae.</title>
        <authorList>
            <person name="Read T.D."/>
            <person name="Myers G.S.A."/>
            <person name="Brunham R.C."/>
            <person name="Nelson W.C."/>
            <person name="Paulsen I.T."/>
            <person name="Heidelberg J.F."/>
            <person name="Holtzapple E.K."/>
            <person name="Khouri H.M."/>
            <person name="Federova N.B."/>
            <person name="Carty H.A."/>
            <person name="Umayam L.A."/>
            <person name="Haft D.H."/>
            <person name="Peterson J.D."/>
            <person name="Beanan M.J."/>
            <person name="White O."/>
            <person name="Salzberg S.L."/>
            <person name="Hsia R.-C."/>
            <person name="McClarty G."/>
            <person name="Rank R.G."/>
            <person name="Bavoil P.M."/>
            <person name="Fraser C.M."/>
        </authorList>
    </citation>
    <scope>NUCLEOTIDE SEQUENCE [LARGE SCALE GENOMIC DNA]</scope>
    <source>
        <strain>ATCC VR-813 / DSM 19441 / 03DC25 / GPIC</strain>
    </source>
</reference>
<feature type="chain" id="PRO_0000114004" description="Glutamyl-tRNA reductase">
    <location>
        <begin position="1"/>
        <end position="338"/>
    </location>
</feature>
<feature type="active site" description="Nucleophile" evidence="1">
    <location>
        <position position="51"/>
    </location>
</feature>
<feature type="binding site" evidence="1">
    <location>
        <begin position="50"/>
        <end position="53"/>
    </location>
    <ligand>
        <name>substrate</name>
    </ligand>
</feature>
<feature type="binding site" evidence="1">
    <location>
        <position position="102"/>
    </location>
    <ligand>
        <name>substrate</name>
    </ligand>
</feature>
<feature type="binding site" evidence="1">
    <location>
        <begin position="107"/>
        <end position="109"/>
    </location>
    <ligand>
        <name>substrate</name>
    </ligand>
</feature>
<feature type="binding site" evidence="1">
    <location>
        <position position="113"/>
    </location>
    <ligand>
        <name>substrate</name>
    </ligand>
</feature>
<feature type="binding site" evidence="1">
    <location>
        <begin position="181"/>
        <end position="186"/>
    </location>
    <ligand>
        <name>NADP(+)</name>
        <dbReference type="ChEBI" id="CHEBI:58349"/>
    </ligand>
</feature>
<feature type="site" description="Important for activity" evidence="1">
    <location>
        <position position="92"/>
    </location>
</feature>
<accession>Q824W1</accession>
<dbReference type="EC" id="1.2.1.70" evidence="1"/>
<dbReference type="EMBL" id="AE015925">
    <property type="protein sequence ID" value="AAP04780.1"/>
    <property type="molecule type" value="Genomic_DNA"/>
</dbReference>
<dbReference type="RefSeq" id="WP_011006001.1">
    <property type="nucleotide sequence ID" value="NC_003361.3"/>
</dbReference>
<dbReference type="SMR" id="Q824W1"/>
<dbReference type="STRING" id="227941.CCA_00028"/>
<dbReference type="KEGG" id="cca:CCA_00028"/>
<dbReference type="eggNOG" id="COG0373">
    <property type="taxonomic scope" value="Bacteria"/>
</dbReference>
<dbReference type="HOGENOM" id="CLU_035113_3_1_0"/>
<dbReference type="OrthoDB" id="110209at2"/>
<dbReference type="UniPathway" id="UPA00251">
    <property type="reaction ID" value="UER00316"/>
</dbReference>
<dbReference type="Proteomes" id="UP000002193">
    <property type="component" value="Chromosome"/>
</dbReference>
<dbReference type="GO" id="GO:0008883">
    <property type="term" value="F:glutamyl-tRNA reductase activity"/>
    <property type="evidence" value="ECO:0007669"/>
    <property type="project" value="UniProtKB-UniRule"/>
</dbReference>
<dbReference type="GO" id="GO:0050661">
    <property type="term" value="F:NADP binding"/>
    <property type="evidence" value="ECO:0007669"/>
    <property type="project" value="InterPro"/>
</dbReference>
<dbReference type="GO" id="GO:0006782">
    <property type="term" value="P:protoporphyrinogen IX biosynthetic process"/>
    <property type="evidence" value="ECO:0007669"/>
    <property type="project" value="UniProtKB-UniRule"/>
</dbReference>
<dbReference type="Gene3D" id="3.30.460.30">
    <property type="entry name" value="Glutamyl-tRNA reductase, N-terminal domain"/>
    <property type="match status" value="1"/>
</dbReference>
<dbReference type="HAMAP" id="MF_00087">
    <property type="entry name" value="Glu_tRNA_reductase"/>
    <property type="match status" value="1"/>
</dbReference>
<dbReference type="InterPro" id="IPR000343">
    <property type="entry name" value="4pyrrol_synth_GluRdtase"/>
</dbReference>
<dbReference type="InterPro" id="IPR015895">
    <property type="entry name" value="4pyrrol_synth_GluRdtase_N"/>
</dbReference>
<dbReference type="InterPro" id="IPR018214">
    <property type="entry name" value="GluRdtase_CS"/>
</dbReference>
<dbReference type="InterPro" id="IPR036343">
    <property type="entry name" value="GluRdtase_N_sf"/>
</dbReference>
<dbReference type="NCBIfam" id="NF001909">
    <property type="entry name" value="PRK00676.1"/>
    <property type="match status" value="1"/>
</dbReference>
<dbReference type="PANTHER" id="PTHR43120">
    <property type="entry name" value="GLUTAMYL-TRNA REDUCTASE 1, CHLOROPLASTIC"/>
    <property type="match status" value="1"/>
</dbReference>
<dbReference type="PANTHER" id="PTHR43120:SF1">
    <property type="entry name" value="GLUTAMYL-TRNA REDUCTASE 1, CHLOROPLASTIC"/>
    <property type="match status" value="1"/>
</dbReference>
<dbReference type="Pfam" id="PF05201">
    <property type="entry name" value="GlutR_N"/>
    <property type="match status" value="1"/>
</dbReference>
<dbReference type="SUPFAM" id="SSF69742">
    <property type="entry name" value="Glutamyl tRNA-reductase catalytic, N-terminal domain"/>
    <property type="match status" value="1"/>
</dbReference>
<dbReference type="PROSITE" id="PS00747">
    <property type="entry name" value="GLUTR"/>
    <property type="match status" value="1"/>
</dbReference>
<organism>
    <name type="scientific">Chlamydia caviae (strain ATCC VR-813 / DSM 19441 / 03DC25 / GPIC)</name>
    <name type="common">Chlamydophila caviae</name>
    <dbReference type="NCBI Taxonomy" id="227941"/>
    <lineage>
        <taxon>Bacteria</taxon>
        <taxon>Pseudomonadati</taxon>
        <taxon>Chlamydiota</taxon>
        <taxon>Chlamydiia</taxon>
        <taxon>Chlamydiales</taxon>
        <taxon>Chlamydiaceae</taxon>
        <taxon>Chlamydia/Chlamydophila group</taxon>
        <taxon>Chlamydia</taxon>
    </lineage>
</organism>
<comment type="function">
    <text evidence="1">Catalyzes the NADPH-dependent reduction of glutamyl-tRNA(Glu) to glutamate 1-semialdehyde (GSA).</text>
</comment>
<comment type="catalytic activity">
    <reaction evidence="1">
        <text>(S)-4-amino-5-oxopentanoate + tRNA(Glu) + NADP(+) = L-glutamyl-tRNA(Glu) + NADPH + H(+)</text>
        <dbReference type="Rhea" id="RHEA:12344"/>
        <dbReference type="Rhea" id="RHEA-COMP:9663"/>
        <dbReference type="Rhea" id="RHEA-COMP:9680"/>
        <dbReference type="ChEBI" id="CHEBI:15378"/>
        <dbReference type="ChEBI" id="CHEBI:57501"/>
        <dbReference type="ChEBI" id="CHEBI:57783"/>
        <dbReference type="ChEBI" id="CHEBI:58349"/>
        <dbReference type="ChEBI" id="CHEBI:78442"/>
        <dbReference type="ChEBI" id="CHEBI:78520"/>
        <dbReference type="EC" id="1.2.1.70"/>
    </reaction>
</comment>
<comment type="pathway">
    <text evidence="1">Porphyrin-containing compound metabolism; protoporphyrin-IX biosynthesis; 5-aminolevulinate from L-glutamyl-tRNA(Glu): step 1/2.</text>
</comment>
<comment type="subunit">
    <text evidence="1">Homodimer.</text>
</comment>
<comment type="domain">
    <text evidence="1">Possesses an unusual extended V-shaped dimeric structure with each monomer consisting of three distinct domains arranged along a curved 'spinal' alpha-helix. The N-terminal catalytic domain specifically recognizes the glutamate moiety of the substrate. The second domain is the NADPH-binding domain, and the third C-terminal domain is responsible for dimerization.</text>
</comment>
<comment type="miscellaneous">
    <text evidence="1">During catalysis, the active site Cys acts as a nucleophile attacking the alpha-carbonyl group of tRNA-bound glutamate with the formation of a thioester intermediate between enzyme and glutamate, and the concomitant release of tRNA(Glu). The thioester intermediate is finally reduced by direct hydride transfer from NADPH, to form the product GSA.</text>
</comment>
<comment type="similarity">
    <text evidence="1">Belongs to the glutamyl-tRNA reductase family.</text>
</comment>
<gene>
    <name evidence="1" type="primary">hemA</name>
    <name type="ordered locus">CCA_00028</name>
</gene>
<protein>
    <recommendedName>
        <fullName evidence="1">Glutamyl-tRNA reductase</fullName>
        <shortName evidence="1">GluTR</shortName>
        <ecNumber evidence="1">1.2.1.70</ecNumber>
    </recommendedName>
</protein>